<feature type="chain" id="PRO_0000354701" description="Obg-like ATPase 1">
    <location>
        <begin position="1"/>
        <end position="396"/>
    </location>
</feature>
<feature type="domain" description="OBG-type G">
    <location>
        <begin position="23"/>
        <end position="283"/>
    </location>
</feature>
<feature type="domain" description="TGS" evidence="3">
    <location>
        <begin position="304"/>
        <end position="387"/>
    </location>
</feature>
<feature type="short sequence motif" description="Nuclear export signal" evidence="2">
    <location>
        <begin position="267"/>
        <end position="274"/>
    </location>
</feature>
<feature type="binding site" evidence="2">
    <location>
        <begin position="32"/>
        <end position="37"/>
    </location>
    <ligand>
        <name>ATP</name>
        <dbReference type="ChEBI" id="CHEBI:30616"/>
    </ligand>
</feature>
<feature type="binding site" evidence="1">
    <location>
        <position position="36"/>
    </location>
    <ligand>
        <name>Mg(2+)</name>
        <dbReference type="ChEBI" id="CHEBI:18420"/>
    </ligand>
</feature>
<feature type="binding site" evidence="1">
    <location>
        <position position="56"/>
    </location>
    <ligand>
        <name>Mg(2+)</name>
        <dbReference type="ChEBI" id="CHEBI:18420"/>
    </ligand>
</feature>
<feature type="binding site" evidence="2">
    <location>
        <position position="231"/>
    </location>
    <ligand>
        <name>ATP</name>
        <dbReference type="ChEBI" id="CHEBI:30616"/>
    </ligand>
</feature>
<organism>
    <name type="scientific">Xenopus laevis</name>
    <name type="common">African clawed frog</name>
    <dbReference type="NCBI Taxonomy" id="8355"/>
    <lineage>
        <taxon>Eukaryota</taxon>
        <taxon>Metazoa</taxon>
        <taxon>Chordata</taxon>
        <taxon>Craniata</taxon>
        <taxon>Vertebrata</taxon>
        <taxon>Euteleostomi</taxon>
        <taxon>Amphibia</taxon>
        <taxon>Batrachia</taxon>
        <taxon>Anura</taxon>
        <taxon>Pipoidea</taxon>
        <taxon>Pipidae</taxon>
        <taxon>Xenopodinae</taxon>
        <taxon>Xenopus</taxon>
        <taxon>Xenopus</taxon>
    </lineage>
</organism>
<dbReference type="EMBL" id="BC046937">
    <property type="protein sequence ID" value="AAH46937.1"/>
    <property type="molecule type" value="mRNA"/>
</dbReference>
<dbReference type="RefSeq" id="NP_001079680.1">
    <property type="nucleotide sequence ID" value="NM_001086211.1"/>
</dbReference>
<dbReference type="SMR" id="Q7ZWM6"/>
<dbReference type="DNASU" id="379367"/>
<dbReference type="GeneID" id="379367"/>
<dbReference type="KEGG" id="xla:379367"/>
<dbReference type="AGR" id="Xenbase:XB-GENE-1015264"/>
<dbReference type="CTD" id="379367"/>
<dbReference type="Xenbase" id="XB-GENE-1015264">
    <property type="gene designation" value="ola1.L"/>
</dbReference>
<dbReference type="OrthoDB" id="424823at2759"/>
<dbReference type="Proteomes" id="UP000186698">
    <property type="component" value="Chromosome 9_10L"/>
</dbReference>
<dbReference type="Bgee" id="379367">
    <property type="expression patterns" value="Expressed in spleen and 19 other cell types or tissues"/>
</dbReference>
<dbReference type="GO" id="GO:0005737">
    <property type="term" value="C:cytoplasm"/>
    <property type="evidence" value="ECO:0000318"/>
    <property type="project" value="GO_Central"/>
</dbReference>
<dbReference type="GO" id="GO:0005730">
    <property type="term" value="C:nucleolus"/>
    <property type="evidence" value="ECO:0007669"/>
    <property type="project" value="UniProtKB-SubCell"/>
</dbReference>
<dbReference type="GO" id="GO:0005524">
    <property type="term" value="F:ATP binding"/>
    <property type="evidence" value="ECO:0007669"/>
    <property type="project" value="UniProtKB-UniRule"/>
</dbReference>
<dbReference type="GO" id="GO:0016887">
    <property type="term" value="F:ATP hydrolysis activity"/>
    <property type="evidence" value="ECO:0000318"/>
    <property type="project" value="GO_Central"/>
</dbReference>
<dbReference type="GO" id="GO:0005525">
    <property type="term" value="F:GTP binding"/>
    <property type="evidence" value="ECO:0007669"/>
    <property type="project" value="InterPro"/>
</dbReference>
<dbReference type="GO" id="GO:0046872">
    <property type="term" value="F:metal ion binding"/>
    <property type="evidence" value="ECO:0007669"/>
    <property type="project" value="UniProtKB-KW"/>
</dbReference>
<dbReference type="GO" id="GO:0043023">
    <property type="term" value="F:ribosomal large subunit binding"/>
    <property type="evidence" value="ECO:0007669"/>
    <property type="project" value="UniProtKB-UniRule"/>
</dbReference>
<dbReference type="CDD" id="cd04867">
    <property type="entry name" value="TGS_YchF_OLA1"/>
    <property type="match status" value="1"/>
</dbReference>
<dbReference type="CDD" id="cd01900">
    <property type="entry name" value="YchF"/>
    <property type="match status" value="1"/>
</dbReference>
<dbReference type="FunFam" id="1.10.150.300:FF:000003">
    <property type="entry name" value="Obg-like ATPase 1"/>
    <property type="match status" value="1"/>
</dbReference>
<dbReference type="FunFam" id="3.10.20.30:FF:000029">
    <property type="entry name" value="Obg-like ATPase 1"/>
    <property type="match status" value="1"/>
</dbReference>
<dbReference type="Gene3D" id="3.10.20.30">
    <property type="match status" value="1"/>
</dbReference>
<dbReference type="Gene3D" id="3.40.50.300">
    <property type="entry name" value="P-loop containing nucleotide triphosphate hydrolases"/>
    <property type="match status" value="1"/>
</dbReference>
<dbReference type="Gene3D" id="1.10.150.300">
    <property type="entry name" value="TGS-like domain"/>
    <property type="match status" value="1"/>
</dbReference>
<dbReference type="HAMAP" id="MF_00944">
    <property type="entry name" value="YchF_OLA1_ATPase"/>
    <property type="match status" value="1"/>
</dbReference>
<dbReference type="InterPro" id="IPR004396">
    <property type="entry name" value="ATPase_YchF/OLA1"/>
</dbReference>
<dbReference type="InterPro" id="IPR012675">
    <property type="entry name" value="Beta-grasp_dom_sf"/>
</dbReference>
<dbReference type="InterPro" id="IPR031167">
    <property type="entry name" value="G_OBG"/>
</dbReference>
<dbReference type="InterPro" id="IPR006073">
    <property type="entry name" value="GTP-bd"/>
</dbReference>
<dbReference type="InterPro" id="IPR027417">
    <property type="entry name" value="P-loop_NTPase"/>
</dbReference>
<dbReference type="InterPro" id="IPR004095">
    <property type="entry name" value="TGS"/>
</dbReference>
<dbReference type="InterPro" id="IPR012676">
    <property type="entry name" value="TGS-like"/>
</dbReference>
<dbReference type="InterPro" id="IPR023192">
    <property type="entry name" value="TGS-like_dom_sf"/>
</dbReference>
<dbReference type="InterPro" id="IPR013029">
    <property type="entry name" value="YchF_C"/>
</dbReference>
<dbReference type="InterPro" id="IPR041706">
    <property type="entry name" value="YchF_N"/>
</dbReference>
<dbReference type="NCBIfam" id="TIGR00092">
    <property type="entry name" value="redox-regulated ATPase YchF"/>
    <property type="match status" value="1"/>
</dbReference>
<dbReference type="PANTHER" id="PTHR23305">
    <property type="entry name" value="OBG GTPASE FAMILY"/>
    <property type="match status" value="1"/>
</dbReference>
<dbReference type="PANTHER" id="PTHR23305:SF11">
    <property type="entry name" value="OBG-LIKE ATPASE 1"/>
    <property type="match status" value="1"/>
</dbReference>
<dbReference type="Pfam" id="PF01926">
    <property type="entry name" value="MMR_HSR1"/>
    <property type="match status" value="1"/>
</dbReference>
<dbReference type="Pfam" id="PF06071">
    <property type="entry name" value="YchF-GTPase_C"/>
    <property type="match status" value="1"/>
</dbReference>
<dbReference type="PIRSF" id="PIRSF006641">
    <property type="entry name" value="CHP00092"/>
    <property type="match status" value="1"/>
</dbReference>
<dbReference type="PRINTS" id="PR00326">
    <property type="entry name" value="GTP1OBG"/>
</dbReference>
<dbReference type="SUPFAM" id="SSF52540">
    <property type="entry name" value="P-loop containing nucleoside triphosphate hydrolases"/>
    <property type="match status" value="1"/>
</dbReference>
<dbReference type="SUPFAM" id="SSF81271">
    <property type="entry name" value="TGS-like"/>
    <property type="match status" value="1"/>
</dbReference>
<dbReference type="PROSITE" id="PS51710">
    <property type="entry name" value="G_OBG"/>
    <property type="match status" value="1"/>
</dbReference>
<dbReference type="PROSITE" id="PS51880">
    <property type="entry name" value="TGS"/>
    <property type="match status" value="1"/>
</dbReference>
<name>OLA1_XENLA</name>
<proteinExistence type="evidence at transcript level"/>
<gene>
    <name type="primary">ola1</name>
</gene>
<evidence type="ECO:0000250" key="1"/>
<evidence type="ECO:0000255" key="2">
    <source>
        <dbReference type="HAMAP-Rule" id="MF_03167"/>
    </source>
</evidence>
<evidence type="ECO:0000255" key="3">
    <source>
        <dbReference type="PROSITE-ProRule" id="PRU01228"/>
    </source>
</evidence>
<comment type="function">
    <text evidence="2">Hydrolyzes ATP, and can also hydrolyze GTP with lower efficiency. Has lower affinity for GTP.</text>
</comment>
<comment type="cofactor">
    <cofactor evidence="1">
        <name>Mg(2+)</name>
        <dbReference type="ChEBI" id="CHEBI:18420"/>
    </cofactor>
</comment>
<comment type="subunit">
    <text evidence="2">Monomer.</text>
</comment>
<comment type="subcellular location">
    <subcellularLocation>
        <location evidence="2">Cytoplasm</location>
    </subcellularLocation>
    <subcellularLocation>
        <location evidence="2">Nucleus</location>
    </subcellularLocation>
    <subcellularLocation>
        <location evidence="2">Nucleus</location>
        <location evidence="2">Nucleolus</location>
    </subcellularLocation>
    <text evidence="2">Predominantly cytoplasmic, shuttles between the nucleus and the cytoplasm.</text>
</comment>
<comment type="similarity">
    <text evidence="2">Belongs to the TRAFAC class OBG-HflX-like GTPase superfamily. OBG GTPase family. YchF/OLA1 subfamily.</text>
</comment>
<reference key="1">
    <citation type="submission" date="2003-02" db="EMBL/GenBank/DDBJ databases">
        <authorList>
            <consortium name="NIH - Xenopus Gene Collection (XGC) project"/>
        </authorList>
    </citation>
    <scope>NUCLEOTIDE SEQUENCE [LARGE SCALE MRNA]</scope>
    <source>
        <tissue>Embryo</tissue>
    </source>
</reference>
<keyword id="KW-0067">ATP-binding</keyword>
<keyword id="KW-0963">Cytoplasm</keyword>
<keyword id="KW-0378">Hydrolase</keyword>
<keyword id="KW-0460">Magnesium</keyword>
<keyword id="KW-0479">Metal-binding</keyword>
<keyword id="KW-0547">Nucleotide-binding</keyword>
<keyword id="KW-0539">Nucleus</keyword>
<keyword id="KW-1185">Reference proteome</keyword>
<protein>
    <recommendedName>
        <fullName evidence="2">Obg-like ATPase 1</fullName>
    </recommendedName>
</protein>
<accession>Q7ZWM6</accession>
<sequence>MPPKKADDGPKQHPIIGRFGTSLKIGIVGLPNIGKSTFFNVLTKSQAAAENFPFCTINPNESRVPVPDDRFEFLCEHHKPASKVPAFLNVVDIAGLVKGASAGQGLGNAFLSHISACDGIFHLMRAFDDDDIIHVEGNVNPVRDIEIIREELRLKDEEMIIAALDKLEKVAVRGGDKKLKPEYDIMCKVKTWVIDEKNHVRYYHDWNDKEIDVLNKYLFLTSKPMIYLINLSEKDYIRKKNKWLIKIKEWVDKNDPGALVIPFSGVLELNLQDMSDEEKQKYLEEKMTQSVLSKIIKTGYAALQLEYFFTAGPDEVRAWTIKKGTKAPQAAGKIHTDFEKGFIMAEVMKFDDFKEEGTEASVKAAGKYRQQGRNYTVEDGDIIFFKFNTPQQSKKK</sequence>